<keyword id="KW-0067">ATP-binding</keyword>
<keyword id="KW-0131">Cell cycle</keyword>
<keyword id="KW-0132">Cell division</keyword>
<keyword id="KW-0133">Cell shape</keyword>
<keyword id="KW-0961">Cell wall biogenesis/degradation</keyword>
<keyword id="KW-0963">Cytoplasm</keyword>
<keyword id="KW-0436">Ligase</keyword>
<keyword id="KW-0547">Nucleotide-binding</keyword>
<keyword id="KW-0573">Peptidoglycan synthesis</keyword>
<keyword id="KW-1185">Reference proteome</keyword>
<organism>
    <name type="scientific">Streptococcus agalactiae serotype V (strain ATCC BAA-611 / 2603 V/R)</name>
    <dbReference type="NCBI Taxonomy" id="208435"/>
    <lineage>
        <taxon>Bacteria</taxon>
        <taxon>Bacillati</taxon>
        <taxon>Bacillota</taxon>
        <taxon>Bacilli</taxon>
        <taxon>Lactobacillales</taxon>
        <taxon>Streptococcaceae</taxon>
        <taxon>Streptococcus</taxon>
    </lineage>
</organism>
<protein>
    <recommendedName>
        <fullName evidence="1">UDP-N-acetylmuramate--L-alanine ligase</fullName>
        <ecNumber evidence="1">6.3.2.8</ecNumber>
    </recommendedName>
    <alternativeName>
        <fullName evidence="1">UDP-N-acetylmuramoyl-L-alanine synthetase</fullName>
    </alternativeName>
</protein>
<feature type="chain" id="PRO_0000182162" description="UDP-N-acetylmuramate--L-alanine ligase">
    <location>
        <begin position="1"/>
        <end position="443"/>
    </location>
</feature>
<feature type="binding site" evidence="1">
    <location>
        <begin position="110"/>
        <end position="116"/>
    </location>
    <ligand>
        <name>ATP</name>
        <dbReference type="ChEBI" id="CHEBI:30616"/>
    </ligand>
</feature>
<dbReference type="EC" id="6.3.2.8" evidence="1"/>
<dbReference type="EMBL" id="AE009948">
    <property type="protein sequence ID" value="AAN00479.1"/>
    <property type="molecule type" value="Genomic_DNA"/>
</dbReference>
<dbReference type="RefSeq" id="NP_688606.1">
    <property type="nucleotide sequence ID" value="NC_004116.1"/>
</dbReference>
<dbReference type="RefSeq" id="WP_000048112.1">
    <property type="nucleotide sequence ID" value="NC_004116.1"/>
</dbReference>
<dbReference type="SMR" id="Q8DY77"/>
<dbReference type="STRING" id="208435.SAG1615"/>
<dbReference type="KEGG" id="sag:SAG1615"/>
<dbReference type="PATRIC" id="fig|208435.3.peg.1625"/>
<dbReference type="HOGENOM" id="CLU_028104_1_0_9"/>
<dbReference type="OrthoDB" id="9804126at2"/>
<dbReference type="UniPathway" id="UPA00219"/>
<dbReference type="Proteomes" id="UP000000821">
    <property type="component" value="Chromosome"/>
</dbReference>
<dbReference type="GO" id="GO:0005737">
    <property type="term" value="C:cytoplasm"/>
    <property type="evidence" value="ECO:0007669"/>
    <property type="project" value="UniProtKB-SubCell"/>
</dbReference>
<dbReference type="GO" id="GO:0005524">
    <property type="term" value="F:ATP binding"/>
    <property type="evidence" value="ECO:0007669"/>
    <property type="project" value="UniProtKB-UniRule"/>
</dbReference>
<dbReference type="GO" id="GO:0008763">
    <property type="term" value="F:UDP-N-acetylmuramate-L-alanine ligase activity"/>
    <property type="evidence" value="ECO:0007669"/>
    <property type="project" value="UniProtKB-UniRule"/>
</dbReference>
<dbReference type="GO" id="GO:0051301">
    <property type="term" value="P:cell division"/>
    <property type="evidence" value="ECO:0007669"/>
    <property type="project" value="UniProtKB-KW"/>
</dbReference>
<dbReference type="GO" id="GO:0071555">
    <property type="term" value="P:cell wall organization"/>
    <property type="evidence" value="ECO:0007669"/>
    <property type="project" value="UniProtKB-KW"/>
</dbReference>
<dbReference type="GO" id="GO:0009252">
    <property type="term" value="P:peptidoglycan biosynthetic process"/>
    <property type="evidence" value="ECO:0007669"/>
    <property type="project" value="UniProtKB-UniRule"/>
</dbReference>
<dbReference type="GO" id="GO:0008360">
    <property type="term" value="P:regulation of cell shape"/>
    <property type="evidence" value="ECO:0007669"/>
    <property type="project" value="UniProtKB-KW"/>
</dbReference>
<dbReference type="Gene3D" id="3.90.190.20">
    <property type="entry name" value="Mur ligase, C-terminal domain"/>
    <property type="match status" value="1"/>
</dbReference>
<dbReference type="Gene3D" id="3.40.1190.10">
    <property type="entry name" value="Mur-like, catalytic domain"/>
    <property type="match status" value="1"/>
</dbReference>
<dbReference type="Gene3D" id="3.40.50.720">
    <property type="entry name" value="NAD(P)-binding Rossmann-like Domain"/>
    <property type="match status" value="1"/>
</dbReference>
<dbReference type="HAMAP" id="MF_00046">
    <property type="entry name" value="MurC"/>
    <property type="match status" value="1"/>
</dbReference>
<dbReference type="InterPro" id="IPR036565">
    <property type="entry name" value="Mur-like_cat_sf"/>
</dbReference>
<dbReference type="InterPro" id="IPR004101">
    <property type="entry name" value="Mur_ligase_C"/>
</dbReference>
<dbReference type="InterPro" id="IPR036615">
    <property type="entry name" value="Mur_ligase_C_dom_sf"/>
</dbReference>
<dbReference type="InterPro" id="IPR013221">
    <property type="entry name" value="Mur_ligase_cen"/>
</dbReference>
<dbReference type="InterPro" id="IPR000713">
    <property type="entry name" value="Mur_ligase_N"/>
</dbReference>
<dbReference type="InterPro" id="IPR050061">
    <property type="entry name" value="MurCDEF_pg_biosynth"/>
</dbReference>
<dbReference type="InterPro" id="IPR005758">
    <property type="entry name" value="UDP-N-AcMur_Ala_ligase_MurC"/>
</dbReference>
<dbReference type="NCBIfam" id="TIGR01082">
    <property type="entry name" value="murC"/>
    <property type="match status" value="1"/>
</dbReference>
<dbReference type="PANTHER" id="PTHR43445:SF3">
    <property type="entry name" value="UDP-N-ACETYLMURAMATE--L-ALANINE LIGASE"/>
    <property type="match status" value="1"/>
</dbReference>
<dbReference type="PANTHER" id="PTHR43445">
    <property type="entry name" value="UDP-N-ACETYLMURAMATE--L-ALANINE LIGASE-RELATED"/>
    <property type="match status" value="1"/>
</dbReference>
<dbReference type="Pfam" id="PF01225">
    <property type="entry name" value="Mur_ligase"/>
    <property type="match status" value="1"/>
</dbReference>
<dbReference type="Pfam" id="PF02875">
    <property type="entry name" value="Mur_ligase_C"/>
    <property type="match status" value="1"/>
</dbReference>
<dbReference type="Pfam" id="PF08245">
    <property type="entry name" value="Mur_ligase_M"/>
    <property type="match status" value="1"/>
</dbReference>
<dbReference type="SUPFAM" id="SSF51984">
    <property type="entry name" value="MurCD N-terminal domain"/>
    <property type="match status" value="1"/>
</dbReference>
<dbReference type="SUPFAM" id="SSF53623">
    <property type="entry name" value="MurD-like peptide ligases, catalytic domain"/>
    <property type="match status" value="1"/>
</dbReference>
<dbReference type="SUPFAM" id="SSF53244">
    <property type="entry name" value="MurD-like peptide ligases, peptide-binding domain"/>
    <property type="match status" value="1"/>
</dbReference>
<reference key="1">
    <citation type="journal article" date="2002" name="Proc. Natl. Acad. Sci. U.S.A.">
        <title>Complete genome sequence and comparative genomic analysis of an emerging human pathogen, serotype V Streptococcus agalactiae.</title>
        <authorList>
            <person name="Tettelin H."/>
            <person name="Masignani V."/>
            <person name="Cieslewicz M.J."/>
            <person name="Eisen J.A."/>
            <person name="Peterson S.N."/>
            <person name="Wessels M.R."/>
            <person name="Paulsen I.T."/>
            <person name="Nelson K.E."/>
            <person name="Margarit I."/>
            <person name="Read T.D."/>
            <person name="Madoff L.C."/>
            <person name="Wolf A.M."/>
            <person name="Beanan M.J."/>
            <person name="Brinkac L.M."/>
            <person name="Daugherty S.C."/>
            <person name="DeBoy R.T."/>
            <person name="Durkin A.S."/>
            <person name="Kolonay J.F."/>
            <person name="Madupu R."/>
            <person name="Lewis M.R."/>
            <person name="Radune D."/>
            <person name="Fedorova N.B."/>
            <person name="Scanlan D."/>
            <person name="Khouri H.M."/>
            <person name="Mulligan S."/>
            <person name="Carty H.A."/>
            <person name="Cline R.T."/>
            <person name="Van Aken S.E."/>
            <person name="Gill J."/>
            <person name="Scarselli M."/>
            <person name="Mora M."/>
            <person name="Iacobini E.T."/>
            <person name="Brettoni C."/>
            <person name="Galli G."/>
            <person name="Mariani M."/>
            <person name="Vegni F."/>
            <person name="Maione D."/>
            <person name="Rinaudo D."/>
            <person name="Rappuoli R."/>
            <person name="Telford J.L."/>
            <person name="Kasper D.L."/>
            <person name="Grandi G."/>
            <person name="Fraser C.M."/>
        </authorList>
    </citation>
    <scope>NUCLEOTIDE SEQUENCE [LARGE SCALE GENOMIC DNA]</scope>
    <source>
        <strain>ATCC BAA-611 / 2603 V/R</strain>
    </source>
</reference>
<evidence type="ECO:0000255" key="1">
    <source>
        <dbReference type="HAMAP-Rule" id="MF_00046"/>
    </source>
</evidence>
<sequence>MSKTYHFIGIKGSGMSALALMLHQMGHNVQGSDVDKYYFTQRGLEQAGVTILPFSPNNISEDLEIIAGNAFRPDNNEELAYVIEKGYQFKRYHEFLGDFMRQFTSLGVAGAHGKTSTTGLLAHVLKNITDTSFLIGDGTGRGSANANYFVFEADEYERHFMPYHPEYSIITNIDFDHPDYFTGLEDVFNAFNDYAKQVQKGLFIYGEDPKLHEITSEAPIYYYGFEDSNDFIAKDITRTVNGSDFKVFYNQEEIGQFHVPAYGKHNILNATAVIANLYIMGIDMALVAEHLKTFSGVKRRFTEKIIDDTVIIDDFAHHPTEIIATLDAARQKYPSKEIVAIFQPHTFTRTIALLDEFAHALSQADSVYLAQIYGSAREVDNGEVKVEDLAAKIVKHSDLVTVENVSPLLNHDNAVYVFMGAGDIQLYERSFEELLANLTKNTQ</sequence>
<gene>
    <name evidence="1" type="primary">murC</name>
    <name type="ordered locus">SAG1615</name>
</gene>
<name>MURC_STRA5</name>
<comment type="function">
    <text evidence="1">Cell wall formation.</text>
</comment>
<comment type="catalytic activity">
    <reaction evidence="1">
        <text>UDP-N-acetyl-alpha-D-muramate + L-alanine + ATP = UDP-N-acetyl-alpha-D-muramoyl-L-alanine + ADP + phosphate + H(+)</text>
        <dbReference type="Rhea" id="RHEA:23372"/>
        <dbReference type="ChEBI" id="CHEBI:15378"/>
        <dbReference type="ChEBI" id="CHEBI:30616"/>
        <dbReference type="ChEBI" id="CHEBI:43474"/>
        <dbReference type="ChEBI" id="CHEBI:57972"/>
        <dbReference type="ChEBI" id="CHEBI:70757"/>
        <dbReference type="ChEBI" id="CHEBI:83898"/>
        <dbReference type="ChEBI" id="CHEBI:456216"/>
        <dbReference type="EC" id="6.3.2.8"/>
    </reaction>
</comment>
<comment type="pathway">
    <text evidence="1">Cell wall biogenesis; peptidoglycan biosynthesis.</text>
</comment>
<comment type="subcellular location">
    <subcellularLocation>
        <location evidence="1">Cytoplasm</location>
    </subcellularLocation>
</comment>
<comment type="similarity">
    <text evidence="1">Belongs to the MurCDEF family.</text>
</comment>
<accession>Q8DY77</accession>
<proteinExistence type="inferred from homology"/>